<sequence>MTKYEILYIIRPNIDEEAKAALVERFDGILTDNGAANLESKDWEKRKLAYEINDFREGIYHIATFEAETTSEALSEFDRLAKINLDILRHMIVKVEA</sequence>
<organism>
    <name type="scientific">Lactococcus lactis subsp. lactis (strain IL1403)</name>
    <name type="common">Streptococcus lactis</name>
    <dbReference type="NCBI Taxonomy" id="272623"/>
    <lineage>
        <taxon>Bacteria</taxon>
        <taxon>Bacillati</taxon>
        <taxon>Bacillota</taxon>
        <taxon>Bacilli</taxon>
        <taxon>Lactobacillales</taxon>
        <taxon>Streptococcaceae</taxon>
        <taxon>Lactococcus</taxon>
    </lineage>
</organism>
<dbReference type="EMBL" id="AE005176">
    <property type="protein sequence ID" value="AAK06289.1"/>
    <property type="molecule type" value="Genomic_DNA"/>
</dbReference>
<dbReference type="PIR" id="G86898">
    <property type="entry name" value="G86898"/>
</dbReference>
<dbReference type="RefSeq" id="NP_268348.1">
    <property type="nucleotide sequence ID" value="NC_002662.1"/>
</dbReference>
<dbReference type="RefSeq" id="WP_003131954.1">
    <property type="nucleotide sequence ID" value="NC_002662.1"/>
</dbReference>
<dbReference type="SMR" id="Q9CDM8"/>
<dbReference type="PaxDb" id="272623-L0383"/>
<dbReference type="EnsemblBacteria" id="AAK06289">
    <property type="protein sequence ID" value="AAK06289"/>
    <property type="gene ID" value="L0383"/>
</dbReference>
<dbReference type="GeneID" id="89634535"/>
<dbReference type="KEGG" id="lla:L0383"/>
<dbReference type="PATRIC" id="fig|272623.7.peg.2353"/>
<dbReference type="eggNOG" id="COG0360">
    <property type="taxonomic scope" value="Bacteria"/>
</dbReference>
<dbReference type="HOGENOM" id="CLU_113441_5_3_9"/>
<dbReference type="OrthoDB" id="9812702at2"/>
<dbReference type="Proteomes" id="UP000002196">
    <property type="component" value="Chromosome"/>
</dbReference>
<dbReference type="GO" id="GO:0005737">
    <property type="term" value="C:cytoplasm"/>
    <property type="evidence" value="ECO:0007669"/>
    <property type="project" value="UniProtKB-ARBA"/>
</dbReference>
<dbReference type="GO" id="GO:1990904">
    <property type="term" value="C:ribonucleoprotein complex"/>
    <property type="evidence" value="ECO:0007669"/>
    <property type="project" value="UniProtKB-KW"/>
</dbReference>
<dbReference type="GO" id="GO:0005840">
    <property type="term" value="C:ribosome"/>
    <property type="evidence" value="ECO:0007669"/>
    <property type="project" value="UniProtKB-KW"/>
</dbReference>
<dbReference type="GO" id="GO:0070181">
    <property type="term" value="F:small ribosomal subunit rRNA binding"/>
    <property type="evidence" value="ECO:0007669"/>
    <property type="project" value="TreeGrafter"/>
</dbReference>
<dbReference type="GO" id="GO:0003735">
    <property type="term" value="F:structural constituent of ribosome"/>
    <property type="evidence" value="ECO:0007669"/>
    <property type="project" value="InterPro"/>
</dbReference>
<dbReference type="GO" id="GO:0006412">
    <property type="term" value="P:translation"/>
    <property type="evidence" value="ECO:0007669"/>
    <property type="project" value="UniProtKB-UniRule"/>
</dbReference>
<dbReference type="CDD" id="cd00473">
    <property type="entry name" value="bS6"/>
    <property type="match status" value="1"/>
</dbReference>
<dbReference type="FunFam" id="3.30.70.60:FF:000002">
    <property type="entry name" value="30S ribosomal protein S6"/>
    <property type="match status" value="1"/>
</dbReference>
<dbReference type="Gene3D" id="3.30.70.60">
    <property type="match status" value="1"/>
</dbReference>
<dbReference type="HAMAP" id="MF_00360">
    <property type="entry name" value="Ribosomal_bS6"/>
    <property type="match status" value="1"/>
</dbReference>
<dbReference type="InterPro" id="IPR000529">
    <property type="entry name" value="Ribosomal_bS6"/>
</dbReference>
<dbReference type="InterPro" id="IPR035980">
    <property type="entry name" value="Ribosomal_bS6_sf"/>
</dbReference>
<dbReference type="InterPro" id="IPR020814">
    <property type="entry name" value="Ribosomal_S6_plastid/chlpt"/>
</dbReference>
<dbReference type="InterPro" id="IPR014717">
    <property type="entry name" value="Transl_elong_EF1B/ribsomal_bS6"/>
</dbReference>
<dbReference type="NCBIfam" id="TIGR00166">
    <property type="entry name" value="S6"/>
    <property type="match status" value="1"/>
</dbReference>
<dbReference type="PANTHER" id="PTHR21011">
    <property type="entry name" value="MITOCHONDRIAL 28S RIBOSOMAL PROTEIN S6"/>
    <property type="match status" value="1"/>
</dbReference>
<dbReference type="PANTHER" id="PTHR21011:SF1">
    <property type="entry name" value="SMALL RIBOSOMAL SUBUNIT PROTEIN BS6M"/>
    <property type="match status" value="1"/>
</dbReference>
<dbReference type="Pfam" id="PF01250">
    <property type="entry name" value="Ribosomal_S6"/>
    <property type="match status" value="1"/>
</dbReference>
<dbReference type="SUPFAM" id="SSF54995">
    <property type="entry name" value="Ribosomal protein S6"/>
    <property type="match status" value="1"/>
</dbReference>
<comment type="function">
    <text evidence="1">Binds together with bS18 to 16S ribosomal RNA.</text>
</comment>
<comment type="similarity">
    <text evidence="2">Belongs to the bacterial ribosomal protein bS6 family.</text>
</comment>
<reference key="1">
    <citation type="journal article" date="2001" name="Genome Res.">
        <title>The complete genome sequence of the lactic acid bacterium Lactococcus lactis ssp. lactis IL1403.</title>
        <authorList>
            <person name="Bolotin A."/>
            <person name="Wincker P."/>
            <person name="Mauger S."/>
            <person name="Jaillon O."/>
            <person name="Malarme K."/>
            <person name="Weissenbach J."/>
            <person name="Ehrlich S.D."/>
            <person name="Sorokin A."/>
        </authorList>
    </citation>
    <scope>NUCLEOTIDE SEQUENCE [LARGE SCALE GENOMIC DNA]</scope>
    <source>
        <strain>IL1403</strain>
    </source>
</reference>
<feature type="chain" id="PRO_0000176780" description="Small ribosomal subunit protein bS6">
    <location>
        <begin position="1"/>
        <end position="97"/>
    </location>
</feature>
<keyword id="KW-1185">Reference proteome</keyword>
<keyword id="KW-0687">Ribonucleoprotein</keyword>
<keyword id="KW-0689">Ribosomal protein</keyword>
<keyword id="KW-0694">RNA-binding</keyword>
<keyword id="KW-0699">rRNA-binding</keyword>
<accession>Q9CDM8</accession>
<proteinExistence type="inferred from homology"/>
<name>RS6_LACLA</name>
<gene>
    <name type="primary">rpsF</name>
    <name type="ordered locus">LL2191</name>
    <name type="ORF">L0383</name>
</gene>
<evidence type="ECO:0000250" key="1"/>
<evidence type="ECO:0000305" key="2"/>
<protein>
    <recommendedName>
        <fullName evidence="2">Small ribosomal subunit protein bS6</fullName>
    </recommendedName>
    <alternativeName>
        <fullName>30S ribosomal protein S6</fullName>
    </alternativeName>
</protein>